<comment type="function">
    <text evidence="3 4 5 6 7 8">Catalyzes the peptide bond hydrolysis in dipeptides, displaying a non-redundant activity toward threonyl dipeptides (By similarity). Mediates threonyl dipeptide catabolism in a tissue-specific way (By similarity). Has high dipeptidase activity toward cysteinylglycine, an intermediate metabolite in glutathione metabolism (PubMed:12473676, PubMed:19346245). Metabolizes N-lactoyl-amino acids, both through hydrolysis to form lactic acid and amino acids, as well as through their formation by reverse proteolysis (PubMed:25964343). Plays a role in the regulation of cell cycle arrest and apoptosis (PubMed:17121880, PubMed:24395568).</text>
</comment>
<comment type="catalytic activity">
    <reaction evidence="4 6">
        <text>Hydrolysis of dipeptides, preferentially hydrophobic dipeptides including prolyl amino acids.</text>
        <dbReference type="EC" id="3.4.13.18"/>
    </reaction>
</comment>
<comment type="catalytic activity">
    <reaction evidence="3">
        <text>L-threonyl-L-threonine + H2O = 2 L-threonine</text>
        <dbReference type="Rhea" id="RHEA:67360"/>
        <dbReference type="ChEBI" id="CHEBI:15377"/>
        <dbReference type="ChEBI" id="CHEBI:57926"/>
        <dbReference type="ChEBI" id="CHEBI:169953"/>
    </reaction>
    <physiologicalReaction direction="left-to-right" evidence="3">
        <dbReference type="Rhea" id="RHEA:67361"/>
    </physiologicalReaction>
</comment>
<comment type="catalytic activity">
    <reaction evidence="3">
        <text>L-threonyl-L-serine + H2O = L-threonine + L-serine</text>
        <dbReference type="Rhea" id="RHEA:67364"/>
        <dbReference type="ChEBI" id="CHEBI:15377"/>
        <dbReference type="ChEBI" id="CHEBI:33384"/>
        <dbReference type="ChEBI" id="CHEBI:57926"/>
        <dbReference type="ChEBI" id="CHEBI:169954"/>
    </reaction>
    <physiologicalReaction direction="left-to-right" evidence="3">
        <dbReference type="Rhea" id="RHEA:67365"/>
    </physiologicalReaction>
</comment>
<comment type="catalytic activity">
    <reaction evidence="3">
        <text>L-seryl-L-threonine + H2O = L-threonine + L-serine</text>
        <dbReference type="Rhea" id="RHEA:67372"/>
        <dbReference type="ChEBI" id="CHEBI:15377"/>
        <dbReference type="ChEBI" id="CHEBI:33384"/>
        <dbReference type="ChEBI" id="CHEBI:57926"/>
        <dbReference type="ChEBI" id="CHEBI:169955"/>
    </reaction>
    <physiologicalReaction direction="left-to-right" evidence="3">
        <dbReference type="Rhea" id="RHEA:67373"/>
    </physiologicalReaction>
</comment>
<comment type="catalytic activity">
    <reaction evidence="6">
        <text>L-cysteinylglycine + H2O = L-cysteine + glycine</text>
        <dbReference type="Rhea" id="RHEA:28783"/>
        <dbReference type="ChEBI" id="CHEBI:15377"/>
        <dbReference type="ChEBI" id="CHEBI:35235"/>
        <dbReference type="ChEBI" id="CHEBI:57305"/>
        <dbReference type="ChEBI" id="CHEBI:61694"/>
    </reaction>
    <physiologicalReaction direction="left-to-right" evidence="17">
        <dbReference type="Rhea" id="RHEA:28784"/>
    </physiologicalReaction>
</comment>
<comment type="catalytic activity">
    <reaction evidence="6">
        <text>L-alanyl-L-cysteine + H2O = L-cysteine + L-alanine</text>
        <dbReference type="Rhea" id="RHEA:67380"/>
        <dbReference type="ChEBI" id="CHEBI:15377"/>
        <dbReference type="ChEBI" id="CHEBI:35235"/>
        <dbReference type="ChEBI" id="CHEBI:57972"/>
        <dbReference type="ChEBI" id="CHEBI:169958"/>
    </reaction>
    <physiologicalReaction direction="left-to-right" evidence="17">
        <dbReference type="Rhea" id="RHEA:67381"/>
    </physiologicalReaction>
</comment>
<comment type="catalytic activity">
    <reaction evidence="8">
        <text>(S)-lactate + L-phenylalanine = N-[(S)-lactoyl]-L-phenylalanine + H2O</text>
        <dbReference type="Rhea" id="RHEA:66724"/>
        <dbReference type="ChEBI" id="CHEBI:15377"/>
        <dbReference type="ChEBI" id="CHEBI:16651"/>
        <dbReference type="ChEBI" id="CHEBI:58095"/>
        <dbReference type="ChEBI" id="CHEBI:167456"/>
    </reaction>
    <physiologicalReaction direction="left-to-right" evidence="18">
        <dbReference type="Rhea" id="RHEA:66725"/>
    </physiologicalReaction>
    <physiologicalReaction direction="right-to-left" evidence="18">
        <dbReference type="Rhea" id="RHEA:66726"/>
    </physiologicalReaction>
</comment>
<comment type="cofactor">
    <cofactor evidence="9">
        <name>Mn(2+)</name>
        <dbReference type="ChEBI" id="CHEBI:29035"/>
    </cofactor>
    <text evidence="9">Binds 2 manganese ions per subunit.</text>
</comment>
<comment type="activity regulation">
    <text evidence="4">Inhibited by p-hydroxymercurybenzoate. The inhibitory concentration 50% (IC(50)) is 13 uM. Inhibited by bestatin. The inhibitory concentration 50% (IC(50)) is 7 nM at pH 9.5.</text>
</comment>
<comment type="biophysicochemical properties">
    <kinetics>
        <KM evidence="4">1.04 mM for L-serylglutamine (at pH 7.5 and in the presence of 0.1 mM manganese ions)</KM>
        <KM evidence="6">0.6 mM for L-cysteinylglycine (at pH 8.0 and in the presence of 50 uM manganese ions)</KM>
        <KM evidence="4">15 mM for carnosine (at pH 9.5 and in the presence of 0.1 mM manganese ions)</KM>
    </kinetics>
</comment>
<comment type="subunit">
    <text evidence="4">Homodimer.</text>
</comment>
<comment type="interaction">
    <interactant intactId="EBI-1190734">
        <id>Q96KP4</id>
    </interactant>
    <interactant intactId="EBI-21014506">
        <id>Q96KN2</id>
        <label>CNDP1</label>
    </interactant>
    <organismsDiffer>false</organismsDiffer>
    <experiments>2</experiments>
</comment>
<comment type="subcellular location">
    <subcellularLocation>
        <location evidence="4 5">Cytoplasm</location>
    </subcellularLocation>
</comment>
<comment type="alternative products">
    <event type="alternative splicing"/>
    <isoform>
        <id>Q96KP4-1</id>
        <name>1</name>
        <sequence type="displayed"/>
    </isoform>
    <isoform>
        <id>Q96KP4-2</id>
        <name>2</name>
        <name evidence="13">CPGL-B</name>
        <sequence type="described" ref="VSP_038203"/>
    </isoform>
</comment>
<comment type="tissue specificity">
    <molecule>Isoform 1</molecule>
    <text evidence="4 7">Ubiquitously expressed with higher levels in kidney and liver (at protein level). Expressed in peripheral blood leukocytes (PubMed:12473676). Expressed in gastric mucosa and down-regulated in gastric cancer mucosal tissues (at protein level) (PubMed:24395568).</text>
</comment>
<comment type="tissue specificity">
    <molecule>Isoform 2</molecule>
    <text evidence="5">Broadly expressed in fetal tissues. Expressed in adult liver and placenta.</text>
</comment>
<comment type="miscellaneous">
    <text evidence="8">The reverse proteolysis is not negligible in vivo as long as the substrates are present in considerable concentrations, such as upon physical exercice. N-lac-Phe plasma levels are increased in patients with PKU with increased plasma Phe levels. N-lactoyl-amino acids are present in many tissues.</text>
</comment>
<comment type="miscellaneous">
    <molecule>Isoform 2</molecule>
    <text evidence="16">Lacks a part of the catalytic domain.</text>
</comment>
<comment type="similarity">
    <text evidence="16">Belongs to the peptidase M20A family.</text>
</comment>
<name>CNDP2_HUMAN</name>
<reference key="1">
    <citation type="journal article" date="2003" name="J. Biol. Chem.">
        <title>Sequence identification and characterization of human carnosinase and a closely related non-specific dipeptidase.</title>
        <authorList>
            <person name="Teufel M."/>
            <person name="Saudek V."/>
            <person name="Ledig J.P."/>
            <person name="Bernhardt A."/>
            <person name="Boularand S."/>
            <person name="Carreau A."/>
            <person name="Cairns N.J."/>
            <person name="Carter C."/>
            <person name="Cowley D.J."/>
            <person name="Duverger D."/>
            <person name="Ganzhorn A.J."/>
            <person name="Guenet C."/>
            <person name="Heintzelmann B."/>
            <person name="Laucher V."/>
            <person name="Sauvage C."/>
            <person name="Smirnova T."/>
        </authorList>
    </citation>
    <scope>NUCLEOTIDE SEQUENCE [MRNA]</scope>
    <scope>PROTEIN SEQUENCE OF 129-137; 276-289; 311-329; 370-375 AND 462-474</scope>
    <scope>CATALYTIC ACTIVITY</scope>
    <scope>ACTIVITY REGULATION</scope>
    <scope>BIOPHYSICOCHEMICAL PROPERTIES</scope>
    <scope>SUBUNIT</scope>
    <scope>SUBCELLULAR LOCATION</scope>
    <scope>TISSUE SPECIFICITY</scope>
    <source>
        <tissue>Brain</tissue>
    </source>
</reference>
<reference key="2">
    <citation type="submission" date="2001-09" db="EMBL/GenBank/DDBJ databases">
        <title>Cloning and sequencing of human glutamate carboxypeptidase homologue in peptidase family M20.</title>
        <authorList>
            <person name="Chen J.M."/>
            <person name="Barrett A.J."/>
        </authorList>
    </citation>
    <scope>NUCLEOTIDE SEQUENCE [MRNA] (ISOFORM 1)</scope>
    <scope>VARIANT HIS-126</scope>
    <source>
        <tissue>Uterus</tissue>
    </source>
</reference>
<reference key="3">
    <citation type="submission" date="2008-06" db="EMBL/GenBank/DDBJ databases">
        <authorList>
            <person name="Li J.Y."/>
            <person name="Wang H.Y."/>
            <person name="Liu F.J."/>
            <person name="Liu J."/>
        </authorList>
    </citation>
    <scope>NUCLEOTIDE SEQUENCE [MRNA] (ISOFORM 1)</scope>
</reference>
<reference key="4">
    <citation type="journal article" date="2004" name="Nat. Genet.">
        <title>Complete sequencing and characterization of 21,243 full-length human cDNAs.</title>
        <authorList>
            <person name="Ota T."/>
            <person name="Suzuki Y."/>
            <person name="Nishikawa T."/>
            <person name="Otsuki T."/>
            <person name="Sugiyama T."/>
            <person name="Irie R."/>
            <person name="Wakamatsu A."/>
            <person name="Hayashi K."/>
            <person name="Sato H."/>
            <person name="Nagai K."/>
            <person name="Kimura K."/>
            <person name="Makita H."/>
            <person name="Sekine M."/>
            <person name="Obayashi M."/>
            <person name="Nishi T."/>
            <person name="Shibahara T."/>
            <person name="Tanaka T."/>
            <person name="Ishii S."/>
            <person name="Yamamoto J."/>
            <person name="Saito K."/>
            <person name="Kawai Y."/>
            <person name="Isono Y."/>
            <person name="Nakamura Y."/>
            <person name="Nagahari K."/>
            <person name="Murakami K."/>
            <person name="Yasuda T."/>
            <person name="Iwayanagi T."/>
            <person name="Wagatsuma M."/>
            <person name="Shiratori A."/>
            <person name="Sudo H."/>
            <person name="Hosoiri T."/>
            <person name="Kaku Y."/>
            <person name="Kodaira H."/>
            <person name="Kondo H."/>
            <person name="Sugawara M."/>
            <person name="Takahashi M."/>
            <person name="Kanda K."/>
            <person name="Yokoi T."/>
            <person name="Furuya T."/>
            <person name="Kikkawa E."/>
            <person name="Omura Y."/>
            <person name="Abe K."/>
            <person name="Kamihara K."/>
            <person name="Katsuta N."/>
            <person name="Sato K."/>
            <person name="Tanikawa M."/>
            <person name="Yamazaki M."/>
            <person name="Ninomiya K."/>
            <person name="Ishibashi T."/>
            <person name="Yamashita H."/>
            <person name="Murakawa K."/>
            <person name="Fujimori K."/>
            <person name="Tanai H."/>
            <person name="Kimata M."/>
            <person name="Watanabe M."/>
            <person name="Hiraoka S."/>
            <person name="Chiba Y."/>
            <person name="Ishida S."/>
            <person name="Ono Y."/>
            <person name="Takiguchi S."/>
            <person name="Watanabe S."/>
            <person name="Yosida M."/>
            <person name="Hotuta T."/>
            <person name="Kusano J."/>
            <person name="Kanehori K."/>
            <person name="Takahashi-Fujii A."/>
            <person name="Hara H."/>
            <person name="Tanase T.-O."/>
            <person name="Nomura Y."/>
            <person name="Togiya S."/>
            <person name="Komai F."/>
            <person name="Hara R."/>
            <person name="Takeuchi K."/>
            <person name="Arita M."/>
            <person name="Imose N."/>
            <person name="Musashino K."/>
            <person name="Yuuki H."/>
            <person name="Oshima A."/>
            <person name="Sasaki N."/>
            <person name="Aotsuka S."/>
            <person name="Yoshikawa Y."/>
            <person name="Matsunawa H."/>
            <person name="Ichihara T."/>
            <person name="Shiohata N."/>
            <person name="Sano S."/>
            <person name="Moriya S."/>
            <person name="Momiyama H."/>
            <person name="Satoh N."/>
            <person name="Takami S."/>
            <person name="Terashima Y."/>
            <person name="Suzuki O."/>
            <person name="Nakagawa S."/>
            <person name="Senoh A."/>
            <person name="Mizoguchi H."/>
            <person name="Goto Y."/>
            <person name="Shimizu F."/>
            <person name="Wakebe H."/>
            <person name="Hishigaki H."/>
            <person name="Watanabe T."/>
            <person name="Sugiyama A."/>
            <person name="Takemoto M."/>
            <person name="Kawakami B."/>
            <person name="Yamazaki M."/>
            <person name="Watanabe K."/>
            <person name="Kumagai A."/>
            <person name="Itakura S."/>
            <person name="Fukuzumi Y."/>
            <person name="Fujimori Y."/>
            <person name="Komiyama M."/>
            <person name="Tashiro H."/>
            <person name="Tanigami A."/>
            <person name="Fujiwara T."/>
            <person name="Ono T."/>
            <person name="Yamada K."/>
            <person name="Fujii Y."/>
            <person name="Ozaki K."/>
            <person name="Hirao M."/>
            <person name="Ohmori Y."/>
            <person name="Kawabata A."/>
            <person name="Hikiji T."/>
            <person name="Kobatake N."/>
            <person name="Inagaki H."/>
            <person name="Ikema Y."/>
            <person name="Okamoto S."/>
            <person name="Okitani R."/>
            <person name="Kawakami T."/>
            <person name="Noguchi S."/>
            <person name="Itoh T."/>
            <person name="Shigeta K."/>
            <person name="Senba T."/>
            <person name="Matsumura K."/>
            <person name="Nakajima Y."/>
            <person name="Mizuno T."/>
            <person name="Morinaga M."/>
            <person name="Sasaki M."/>
            <person name="Togashi T."/>
            <person name="Oyama M."/>
            <person name="Hata H."/>
            <person name="Watanabe M."/>
            <person name="Komatsu T."/>
            <person name="Mizushima-Sugano J."/>
            <person name="Satoh T."/>
            <person name="Shirai Y."/>
            <person name="Takahashi Y."/>
            <person name="Nakagawa K."/>
            <person name="Okumura K."/>
            <person name="Nagase T."/>
            <person name="Nomura N."/>
            <person name="Kikuchi H."/>
            <person name="Masuho Y."/>
            <person name="Yamashita R."/>
            <person name="Nakai K."/>
            <person name="Yada T."/>
            <person name="Nakamura Y."/>
            <person name="Ohara O."/>
            <person name="Isogai T."/>
            <person name="Sugano S."/>
        </authorList>
    </citation>
    <scope>NUCLEOTIDE SEQUENCE [LARGE SCALE MRNA] (ISOFORM 1)</scope>
    <source>
        <tissue>Spleen</tissue>
        <tissue>Teratocarcinoma</tissue>
    </source>
</reference>
<reference key="5">
    <citation type="journal article" date="2004" name="Proc. Natl. Acad. Sci. U.S.A.">
        <title>Large-scale cDNA transfection screening for genes related to cancer development and progression.</title>
        <authorList>
            <person name="Wan D."/>
            <person name="Gong Y."/>
            <person name="Qin W."/>
            <person name="Zhang P."/>
            <person name="Li J."/>
            <person name="Wei L."/>
            <person name="Zhou X."/>
            <person name="Li H."/>
            <person name="Qiu X."/>
            <person name="Zhong F."/>
            <person name="He L."/>
            <person name="Yu J."/>
            <person name="Yao G."/>
            <person name="Jiang H."/>
            <person name="Qian L."/>
            <person name="Yu Y."/>
            <person name="Shu H."/>
            <person name="Chen X."/>
            <person name="Xu H."/>
            <person name="Guo M."/>
            <person name="Pan Z."/>
            <person name="Chen Y."/>
            <person name="Ge C."/>
            <person name="Yang S."/>
            <person name="Gu J."/>
        </authorList>
    </citation>
    <scope>NUCLEOTIDE SEQUENCE [LARGE SCALE MRNA] (ISOFORM 2)</scope>
</reference>
<reference key="6">
    <citation type="journal article" date="2005" name="Nature">
        <title>DNA sequence and analysis of human chromosome 18.</title>
        <authorList>
            <person name="Nusbaum C."/>
            <person name="Zody M.C."/>
            <person name="Borowsky M.L."/>
            <person name="Kamal M."/>
            <person name="Kodira C.D."/>
            <person name="Taylor T.D."/>
            <person name="Whittaker C.A."/>
            <person name="Chang J.L."/>
            <person name="Cuomo C.A."/>
            <person name="Dewar K."/>
            <person name="FitzGerald M.G."/>
            <person name="Yang X."/>
            <person name="Abouelleil A."/>
            <person name="Allen N.R."/>
            <person name="Anderson S."/>
            <person name="Bloom T."/>
            <person name="Bugalter B."/>
            <person name="Butler J."/>
            <person name="Cook A."/>
            <person name="DeCaprio D."/>
            <person name="Engels R."/>
            <person name="Garber M."/>
            <person name="Gnirke A."/>
            <person name="Hafez N."/>
            <person name="Hall J.L."/>
            <person name="Norman C.H."/>
            <person name="Itoh T."/>
            <person name="Jaffe D.B."/>
            <person name="Kuroki Y."/>
            <person name="Lehoczky J."/>
            <person name="Lui A."/>
            <person name="Macdonald P."/>
            <person name="Mauceli E."/>
            <person name="Mikkelsen T.S."/>
            <person name="Naylor J.W."/>
            <person name="Nicol R."/>
            <person name="Nguyen C."/>
            <person name="Noguchi H."/>
            <person name="O'Leary S.B."/>
            <person name="Piqani B."/>
            <person name="Smith C.L."/>
            <person name="Talamas J.A."/>
            <person name="Topham K."/>
            <person name="Totoki Y."/>
            <person name="Toyoda A."/>
            <person name="Wain H.M."/>
            <person name="Young S.K."/>
            <person name="Zeng Q."/>
            <person name="Zimmer A.R."/>
            <person name="Fujiyama A."/>
            <person name="Hattori M."/>
            <person name="Birren B.W."/>
            <person name="Sakaki Y."/>
            <person name="Lander E.S."/>
        </authorList>
    </citation>
    <scope>NUCLEOTIDE SEQUENCE [LARGE SCALE GENOMIC DNA]</scope>
</reference>
<reference key="7">
    <citation type="submission" date="2005-07" db="EMBL/GenBank/DDBJ databases">
        <authorList>
            <person name="Mural R.J."/>
            <person name="Istrail S."/>
            <person name="Sutton G.G."/>
            <person name="Florea L."/>
            <person name="Halpern A.L."/>
            <person name="Mobarry C.M."/>
            <person name="Lippert R."/>
            <person name="Walenz B."/>
            <person name="Shatkay H."/>
            <person name="Dew I."/>
            <person name="Miller J.R."/>
            <person name="Flanigan M.J."/>
            <person name="Edwards N.J."/>
            <person name="Bolanos R."/>
            <person name="Fasulo D."/>
            <person name="Halldorsson B.V."/>
            <person name="Hannenhalli S."/>
            <person name="Turner R."/>
            <person name="Yooseph S."/>
            <person name="Lu F."/>
            <person name="Nusskern D.R."/>
            <person name="Shue B.C."/>
            <person name="Zheng X.H."/>
            <person name="Zhong F."/>
            <person name="Delcher A.L."/>
            <person name="Huson D.H."/>
            <person name="Kravitz S.A."/>
            <person name="Mouchard L."/>
            <person name="Reinert K."/>
            <person name="Remington K.A."/>
            <person name="Clark A.G."/>
            <person name="Waterman M.S."/>
            <person name="Eichler E.E."/>
            <person name="Adams M.D."/>
            <person name="Hunkapiller M.W."/>
            <person name="Myers E.W."/>
            <person name="Venter J.C."/>
        </authorList>
    </citation>
    <scope>NUCLEOTIDE SEQUENCE [LARGE SCALE GENOMIC DNA]</scope>
</reference>
<reference key="8">
    <citation type="journal article" date="2004" name="Genome Res.">
        <title>The status, quality, and expansion of the NIH full-length cDNA project: the Mammalian Gene Collection (MGC).</title>
        <authorList>
            <consortium name="The MGC Project Team"/>
        </authorList>
    </citation>
    <scope>NUCLEOTIDE SEQUENCE [LARGE SCALE MRNA] (ISOFORM 1)</scope>
    <source>
        <tissue>Colon</tissue>
        <tissue>Kidney</tissue>
    </source>
</reference>
<reference key="9">
    <citation type="submission" date="2008-03" db="UniProtKB">
        <authorList>
            <person name="Bienvenut W.V."/>
            <person name="Heiserich L."/>
            <person name="Gottlieb E."/>
        </authorList>
    </citation>
    <scope>PROTEIN SEQUENCE OF 2-9; 54-66; 255-275 AND 403-430</scope>
    <scope>CLEAVAGE OF INITIATOR METHIONINE</scope>
    <scope>ACETYLATION AT ALA-2</scope>
    <scope>IDENTIFICATION BY MASS SPECTROMETRY</scope>
    <source>
        <tissue>Colon carcinoma</tissue>
    </source>
</reference>
<reference key="10">
    <citation type="journal article" date="2006" name="Clin. Cancer Res.">
        <title>Identification of carboxypeptidase of glutamate like-B as a candidate suppressor in cell growth and metastasis in human hepatocellular carcinoma.</title>
        <authorList>
            <person name="Zhang P."/>
            <person name="Chan D.W."/>
            <person name="Zhu Y."/>
            <person name="Li J.J."/>
            <person name="Ng I.-O."/>
            <person name="Wan D."/>
            <person name="Gu J."/>
        </authorList>
    </citation>
    <scope>SUBCELLULAR LOCATION</scope>
    <scope>TISSUE SPECIFICITY (ISOFORM 2)</scope>
    <scope>FUNCTION</scope>
</reference>
<reference key="11">
    <citation type="journal article" date="2009" name="J. Biol. Chem.">
        <title>Dug1p Is a Cys-Gly peptidase of the gamma-glutamyl cycle of Saccharomyces cerevisiae and represents a novel family of Cys-Gly peptidases.</title>
        <authorList>
            <person name="Kaur H."/>
            <person name="Kumar C."/>
            <person name="Junot C."/>
            <person name="Toledano M.B."/>
            <person name="Bachhawat A.K."/>
        </authorList>
    </citation>
    <scope>FUNCTION</scope>
    <scope>CATALYTIC ACTIVITY</scope>
    <scope>BIOPHYSICOCHEMICAL PROPERTIES</scope>
</reference>
<reference key="12">
    <citation type="journal article" date="2009" name="Science">
        <title>Lysine acetylation targets protein complexes and co-regulates major cellular functions.</title>
        <authorList>
            <person name="Choudhary C."/>
            <person name="Kumar C."/>
            <person name="Gnad F."/>
            <person name="Nielsen M.L."/>
            <person name="Rehman M."/>
            <person name="Walther T.C."/>
            <person name="Olsen J.V."/>
            <person name="Mann M."/>
        </authorList>
    </citation>
    <scope>ACETYLATION [LARGE SCALE ANALYSIS] AT LYS-9</scope>
    <scope>IDENTIFICATION BY MASS SPECTROMETRY [LARGE SCALE ANALYSIS]</scope>
</reference>
<reference key="13">
    <citation type="journal article" date="2011" name="BMC Syst. Biol.">
        <title>Initial characterization of the human central proteome.</title>
        <authorList>
            <person name="Burkard T.R."/>
            <person name="Planyavsky M."/>
            <person name="Kaupe I."/>
            <person name="Breitwieser F.P."/>
            <person name="Buerckstuemmer T."/>
            <person name="Bennett K.L."/>
            <person name="Superti-Furga G."/>
            <person name="Colinge J."/>
        </authorList>
    </citation>
    <scope>IDENTIFICATION BY MASS SPECTROMETRY [LARGE SCALE ANALYSIS]</scope>
</reference>
<reference key="14">
    <citation type="journal article" date="2012" name="Mol. Cell. Proteomics">
        <title>Comparative large-scale characterisation of plant vs. mammal proteins reveals similar and idiosyncratic N-alpha acetylation features.</title>
        <authorList>
            <person name="Bienvenut W.V."/>
            <person name="Sumpton D."/>
            <person name="Martinez A."/>
            <person name="Lilla S."/>
            <person name="Espagne C."/>
            <person name="Meinnel T."/>
            <person name="Giglione C."/>
        </authorList>
    </citation>
    <scope>ACETYLATION [LARGE SCALE ANALYSIS] AT ALA-2</scope>
    <scope>CLEAVAGE OF INITIATOR METHIONINE [LARGE SCALE ANALYSIS]</scope>
    <scope>IDENTIFICATION BY MASS SPECTROMETRY [LARGE SCALE ANALYSIS]</scope>
</reference>
<reference key="15">
    <citation type="journal article" date="2012" name="Proc. Natl. Acad. Sci. U.S.A.">
        <title>N-terminal acetylome analyses and functional insights of the N-terminal acetyltransferase NatB.</title>
        <authorList>
            <person name="Van Damme P."/>
            <person name="Lasa M."/>
            <person name="Polevoda B."/>
            <person name="Gazquez C."/>
            <person name="Elosegui-Artola A."/>
            <person name="Kim D.S."/>
            <person name="De Juan-Pardo E."/>
            <person name="Demeyer K."/>
            <person name="Hole K."/>
            <person name="Larrea E."/>
            <person name="Timmerman E."/>
            <person name="Prieto J."/>
            <person name="Arnesen T."/>
            <person name="Sherman F."/>
            <person name="Gevaert K."/>
            <person name="Aldabe R."/>
        </authorList>
    </citation>
    <scope>ACETYLATION [LARGE SCALE ANALYSIS] AT ALA-2</scope>
    <scope>CLEAVAGE OF INITIATOR METHIONINE [LARGE SCALE ANALYSIS]</scope>
    <scope>IDENTIFICATION BY MASS SPECTROMETRY [LARGE SCALE ANALYSIS]</scope>
</reference>
<reference key="16">
    <citation type="journal article" date="2014" name="J. Proteomics">
        <title>An enzyme assisted RP-RPLC approach for in-depth analysis of human liver phosphoproteome.</title>
        <authorList>
            <person name="Bian Y."/>
            <person name="Song C."/>
            <person name="Cheng K."/>
            <person name="Dong M."/>
            <person name="Wang F."/>
            <person name="Huang J."/>
            <person name="Sun D."/>
            <person name="Wang L."/>
            <person name="Ye M."/>
            <person name="Zou H."/>
        </authorList>
    </citation>
    <scope>PHOSPHORYLATION [LARGE SCALE ANALYSIS] AT SER-299</scope>
    <scope>IDENTIFICATION BY MASS SPECTROMETRY [LARGE SCALE ANALYSIS]</scope>
    <source>
        <tissue>Liver</tissue>
    </source>
</reference>
<reference key="17">
    <citation type="journal article" date="2014" name="Mol. Med.">
        <title>Underexpressed CNDP2 participates in gastric cancer growth inhibition through activating the MAPK signaling pathway.</title>
        <authorList>
            <person name="Zhang Z."/>
            <person name="Miao L."/>
            <person name="Xin X."/>
            <person name="Zhang J."/>
            <person name="Yang S."/>
            <person name="Miao M."/>
            <person name="Kong X."/>
            <person name="Jiao B."/>
        </authorList>
    </citation>
    <scope>FUNCTION</scope>
    <scope>TISSUE SPECIFICITY (ISOFORM 1)</scope>
</reference>
<reference key="18">
    <citation type="journal article" date="2015" name="Proc. Natl. Acad. Sci. U.S.A.">
        <title>N-lactoyl-amino acids are ubiquitous metabolites that originate from CNDP2-mediated reverse proteolysis of lactate and amino acids.</title>
        <authorList>
            <person name="Jansen R.S."/>
            <person name="Addie R."/>
            <person name="Merkx R."/>
            <person name="Fish A."/>
            <person name="Mahakena S."/>
            <person name="Bleijerveld O.B."/>
            <person name="Altelaar M."/>
            <person name="Ijlst L."/>
            <person name="Wanders R.J."/>
            <person name="Borst P."/>
            <person name="van de Wetering K."/>
        </authorList>
    </citation>
    <scope>FUNCTION</scope>
    <scope>CATALYTIC ACTIVITY</scope>
</reference>
<reference key="19">
    <citation type="submission" date="2014-11" db="PDB data bank">
        <title>Crystal structure of Human Carnosinase-2 (CN2) in complex with inhibitor, Bestatin at 2.25 A.</title>
        <authorList>
            <person name="Pandya V."/>
            <person name="Kaushik A."/>
            <person name="Singh A.K."/>
            <person name="Singh R.P."/>
            <person name="Kumaran S."/>
        </authorList>
    </citation>
    <scope>X-RAY CRYSTALLOGRAPHY (2.25 ANGSTROMS) IN COMPLEX WITH MANGANESE</scope>
    <scope>COFACTOR</scope>
</reference>
<gene>
    <name evidence="15 19" type="primary">CNDP2</name>
    <name type="synonym">CN2</name>
    <name type="synonym">CPGL</name>
    <name type="synonym">HEL-S-13</name>
    <name type="synonym">PEPA</name>
</gene>
<keyword id="KW-0002">3D-structure</keyword>
<keyword id="KW-0007">Acetylation</keyword>
<keyword id="KW-0025">Alternative splicing</keyword>
<keyword id="KW-0121">Carboxypeptidase</keyword>
<keyword id="KW-0963">Cytoplasm</keyword>
<keyword id="KW-0903">Direct protein sequencing</keyword>
<keyword id="KW-0378">Hydrolase</keyword>
<keyword id="KW-0464">Manganese</keyword>
<keyword id="KW-0479">Metal-binding</keyword>
<keyword id="KW-0482">Metalloprotease</keyword>
<keyword id="KW-0597">Phosphoprotein</keyword>
<keyword id="KW-0645">Protease</keyword>
<keyword id="KW-1267">Proteomics identification</keyword>
<keyword id="KW-1185">Reference proteome</keyword>
<sequence>MAALTTLFKYIDENQDRYIKKLAKWVAIQSVSAWPEKRGEIRRMMEVAAADVKQLGGSVELVDIGKQKLPDGSEIPLPPILLGRLGSDPQKKTVCIYGHLDVQPAALEDGWDSEPFTLVERDGKLYGRGSTDDKGPVAGWINALEAYQKTGQEIPVNVRFCLEGMEESGSEGLDELIFARKDTFFKDVDYVCISDNYWLGKKKPCITYGLRGICYFFIEVECSNKDLHSGVYGGSVHEAMTDLILLMGSLVDKRGNILIPGINEAVAAVTEEEHKLYDDIDFDIEEFAKDVGAQILLHSHKKDILMHRWRYPSLSLHGIEGAFSGSGAKTVIPRKVVGKFSIRLVPNMTPEVVGEQVTSYLTKKFAELRSPNEFKVYMGHGGKPWVSDFSHPHYLAGRRAMKTVFGVEPDLTREGGSIPVTLTFQEATGKNVMLLPVGSADDGAHSQNEKLNRYNYIEGTKMLAAYLYEVSQLKD</sequence>
<accession>Q96KP4</accession>
<accession>B3KUG4</accession>
<accession>Q8WY59</accession>
<accession>Q9BQ94</accession>
<accession>Q9NVB4</accession>
<accession>V9HWE5</accession>
<organism>
    <name type="scientific">Homo sapiens</name>
    <name type="common">Human</name>
    <dbReference type="NCBI Taxonomy" id="9606"/>
    <lineage>
        <taxon>Eukaryota</taxon>
        <taxon>Metazoa</taxon>
        <taxon>Chordata</taxon>
        <taxon>Craniata</taxon>
        <taxon>Vertebrata</taxon>
        <taxon>Euteleostomi</taxon>
        <taxon>Mammalia</taxon>
        <taxon>Eutheria</taxon>
        <taxon>Euarchontoglires</taxon>
        <taxon>Primates</taxon>
        <taxon>Haplorrhini</taxon>
        <taxon>Catarrhini</taxon>
        <taxon>Hominidae</taxon>
        <taxon>Homo</taxon>
    </lineage>
</organism>
<feature type="initiator methionine" description="Removed" evidence="11 21 22">
    <location>
        <position position="1"/>
    </location>
</feature>
<feature type="chain" id="PRO_0000185272" description="Cytosolic non-specific dipeptidase">
    <location>
        <begin position="2"/>
        <end position="475"/>
    </location>
</feature>
<feature type="active site" evidence="1">
    <location>
        <position position="101"/>
    </location>
</feature>
<feature type="active site" description="Proton acceptor" evidence="1">
    <location>
        <position position="166"/>
    </location>
</feature>
<feature type="binding site" evidence="9">
    <location>
        <position position="99"/>
    </location>
    <ligand>
        <name>Mn(2+)</name>
        <dbReference type="ChEBI" id="CHEBI:29035"/>
        <label>2</label>
    </ligand>
</feature>
<feature type="binding site" evidence="9">
    <location>
        <position position="132"/>
    </location>
    <ligand>
        <name>Mn(2+)</name>
        <dbReference type="ChEBI" id="CHEBI:29035"/>
        <label>1</label>
    </ligand>
</feature>
<feature type="binding site" evidence="9">
    <location>
        <position position="132"/>
    </location>
    <ligand>
        <name>Mn(2+)</name>
        <dbReference type="ChEBI" id="CHEBI:29035"/>
        <label>2</label>
    </ligand>
</feature>
<feature type="binding site" description="in other chain" evidence="1">
    <location>
        <begin position="166"/>
        <end position="167"/>
    </location>
    <ligand>
        <name>substrate</name>
        <note>ligand shared between homodimeric partners</note>
    </ligand>
</feature>
<feature type="binding site" evidence="9">
    <location>
        <position position="167"/>
    </location>
    <ligand>
        <name>Mn(2+)</name>
        <dbReference type="ChEBI" id="CHEBI:29035"/>
        <label>1</label>
    </ligand>
</feature>
<feature type="binding site" evidence="9">
    <location>
        <position position="195"/>
    </location>
    <ligand>
        <name>Mn(2+)</name>
        <dbReference type="ChEBI" id="CHEBI:29035"/>
        <label>2</label>
    </ligand>
</feature>
<feature type="binding site" description="in other chain" evidence="1">
    <location>
        <position position="195"/>
    </location>
    <ligand>
        <name>substrate</name>
        <note>ligand shared between homodimeric partners</note>
    </ligand>
</feature>
<feature type="binding site" evidence="1">
    <location>
        <position position="228"/>
    </location>
    <ligand>
        <name>substrate</name>
        <note>ligand shared between homodimeric partners</note>
    </ligand>
</feature>
<feature type="binding site" evidence="1">
    <location>
        <position position="330"/>
    </location>
    <ligand>
        <name>substrate</name>
        <note>ligand shared between homodimeric partners</note>
    </ligand>
</feature>
<feature type="binding site" description="in other chain" evidence="1">
    <location>
        <position position="343"/>
    </location>
    <ligand>
        <name>substrate</name>
        <note>ligand shared between homodimeric partners</note>
    </ligand>
</feature>
<feature type="binding site" description="in other chain" evidence="1">
    <location>
        <position position="417"/>
    </location>
    <ligand>
        <name>substrate</name>
        <note>ligand shared between homodimeric partners</note>
    </ligand>
</feature>
<feature type="binding site" evidence="9">
    <location>
        <position position="445"/>
    </location>
    <ligand>
        <name>Mn(2+)</name>
        <dbReference type="ChEBI" id="CHEBI:29035"/>
        <label>1</label>
    </ligand>
</feature>
<feature type="binding site" description="in other chain" evidence="1">
    <location>
        <position position="445"/>
    </location>
    <ligand>
        <name>substrate</name>
        <note>ligand shared between homodimeric partners</note>
    </ligand>
</feature>
<feature type="site" description="Important for catalytic activity" evidence="1">
    <location>
        <position position="228"/>
    </location>
</feature>
<feature type="modified residue" description="N-acetylalanine" evidence="11 21 22">
    <location>
        <position position="2"/>
    </location>
</feature>
<feature type="modified residue" description="N6-acetyllysine" evidence="20">
    <location>
        <position position="9"/>
    </location>
</feature>
<feature type="modified residue" description="Phosphoserine" evidence="2">
    <location>
        <position position="58"/>
    </location>
</feature>
<feature type="modified residue" description="Phosphoserine" evidence="23">
    <location>
        <position position="299"/>
    </location>
</feature>
<feature type="splice variant" id="VSP_038203" description="In isoform 2." evidence="12">
    <location>
        <begin position="69"/>
        <end position="152"/>
    </location>
</feature>
<feature type="sequence variant" id="VAR_057154" description="In dbSNP:rs2278161." evidence="10">
    <original>Y</original>
    <variation>H</variation>
    <location>
        <position position="126"/>
    </location>
</feature>
<feature type="sequence conflict" description="In Ref. 4; BAA91840." evidence="16" ref="4">
    <original>R</original>
    <variation>G</variation>
    <location>
        <position position="128"/>
    </location>
</feature>
<feature type="sequence conflict" description="In Ref. 4; BAG53426." evidence="16" ref="4">
    <original>M</original>
    <variation>T</variation>
    <location>
        <position position="348"/>
    </location>
</feature>
<feature type="helix" evidence="24">
    <location>
        <begin position="5"/>
        <end position="13"/>
    </location>
</feature>
<feature type="helix" evidence="24">
    <location>
        <begin position="15"/>
        <end position="27"/>
    </location>
</feature>
<feature type="strand" evidence="24">
    <location>
        <begin position="31"/>
        <end position="33"/>
    </location>
</feature>
<feature type="helix" evidence="24">
    <location>
        <begin position="35"/>
        <end position="37"/>
    </location>
</feature>
<feature type="helix" evidence="24">
    <location>
        <begin position="38"/>
        <end position="54"/>
    </location>
</feature>
<feature type="strand" evidence="24">
    <location>
        <begin position="58"/>
        <end position="62"/>
    </location>
</feature>
<feature type="strand" evidence="24">
    <location>
        <begin position="66"/>
        <end position="68"/>
    </location>
</feature>
<feature type="strand" evidence="24">
    <location>
        <begin position="74"/>
        <end position="76"/>
    </location>
</feature>
<feature type="strand" evidence="24">
    <location>
        <begin position="80"/>
        <end position="85"/>
    </location>
</feature>
<feature type="strand" evidence="24">
    <location>
        <begin position="93"/>
        <end position="99"/>
    </location>
</feature>
<feature type="helix" evidence="24">
    <location>
        <begin position="107"/>
        <end position="109"/>
    </location>
</feature>
<feature type="strand" evidence="24">
    <location>
        <begin position="119"/>
        <end position="121"/>
    </location>
</feature>
<feature type="strand" evidence="24">
    <location>
        <begin position="124"/>
        <end position="127"/>
    </location>
</feature>
<feature type="turn" evidence="24">
    <location>
        <begin position="128"/>
        <end position="133"/>
    </location>
</feature>
<feature type="helix" evidence="24">
    <location>
        <begin position="134"/>
        <end position="149"/>
    </location>
</feature>
<feature type="strand" evidence="24">
    <location>
        <begin position="155"/>
        <end position="164"/>
    </location>
</feature>
<feature type="helix" evidence="24">
    <location>
        <begin position="166"/>
        <end position="168"/>
    </location>
</feature>
<feature type="helix" evidence="24">
    <location>
        <begin position="173"/>
        <end position="180"/>
    </location>
</feature>
<feature type="turn" evidence="24">
    <location>
        <begin position="181"/>
        <end position="184"/>
    </location>
</feature>
<feature type="strand" evidence="24">
    <location>
        <begin position="190"/>
        <end position="193"/>
    </location>
</feature>
<feature type="strand" evidence="24">
    <location>
        <begin position="199"/>
        <end position="203"/>
    </location>
</feature>
<feature type="strand" evidence="24">
    <location>
        <begin position="205"/>
        <end position="210"/>
    </location>
</feature>
<feature type="strand" evidence="24">
    <location>
        <begin position="212"/>
        <end position="221"/>
    </location>
</feature>
<feature type="helix" evidence="24">
    <location>
        <begin position="229"/>
        <end position="232"/>
    </location>
</feature>
<feature type="turn" evidence="24">
    <location>
        <begin position="233"/>
        <end position="235"/>
    </location>
</feature>
<feature type="helix" evidence="24">
    <location>
        <begin position="239"/>
        <end position="247"/>
    </location>
</feature>
<feature type="strand" evidence="24">
    <location>
        <begin position="259"/>
        <end position="261"/>
    </location>
</feature>
<feature type="helix" evidence="24">
    <location>
        <begin position="284"/>
        <end position="289"/>
    </location>
</feature>
<feature type="turn" evidence="24">
    <location>
        <begin position="290"/>
        <end position="292"/>
    </location>
</feature>
<feature type="helix" evidence="24">
    <location>
        <begin position="301"/>
        <end position="309"/>
    </location>
</feature>
<feature type="strand" evidence="24">
    <location>
        <begin position="313"/>
        <end position="322"/>
    </location>
</feature>
<feature type="strand" evidence="24">
    <location>
        <begin position="325"/>
        <end position="327"/>
    </location>
</feature>
<feature type="strand" evidence="24">
    <location>
        <begin position="334"/>
        <end position="344"/>
    </location>
</feature>
<feature type="helix" evidence="24">
    <location>
        <begin position="350"/>
        <end position="368"/>
    </location>
</feature>
<feature type="strand" evidence="24">
    <location>
        <begin position="372"/>
        <end position="382"/>
    </location>
</feature>
<feature type="helix" evidence="24">
    <location>
        <begin position="392"/>
        <end position="405"/>
    </location>
</feature>
<feature type="strand" evidence="24">
    <location>
        <begin position="410"/>
        <end position="416"/>
    </location>
</feature>
<feature type="helix" evidence="24">
    <location>
        <begin position="420"/>
        <end position="428"/>
    </location>
</feature>
<feature type="strand" evidence="24">
    <location>
        <begin position="430"/>
        <end position="434"/>
    </location>
</feature>
<feature type="strand" evidence="24">
    <location>
        <begin position="450"/>
        <end position="452"/>
    </location>
</feature>
<feature type="helix" evidence="24">
    <location>
        <begin position="453"/>
        <end position="471"/>
    </location>
</feature>
<dbReference type="EC" id="3.4.13.18" evidence="4 6"/>
<dbReference type="EMBL" id="AX523938">
    <property type="protein sequence ID" value="CAD56843.1"/>
    <property type="molecule type" value="Unassigned_DNA"/>
</dbReference>
<dbReference type="EMBL" id="AJ347717">
    <property type="protein sequence ID" value="CAC69883.1"/>
    <property type="molecule type" value="mRNA"/>
</dbReference>
<dbReference type="EMBL" id="AK001692">
    <property type="protein sequence ID" value="BAA91840.1"/>
    <property type="molecule type" value="mRNA"/>
</dbReference>
<dbReference type="EMBL" id="AK097155">
    <property type="protein sequence ID" value="BAG53426.1"/>
    <property type="molecule type" value="mRNA"/>
</dbReference>
<dbReference type="EMBL" id="AF258592">
    <property type="protein sequence ID" value="AAG23795.1"/>
    <property type="molecule type" value="mRNA"/>
</dbReference>
<dbReference type="EMBL" id="EU794600">
    <property type="protein sequence ID" value="ACJ13654.1"/>
    <property type="molecule type" value="mRNA"/>
</dbReference>
<dbReference type="EMBL" id="AC009704">
    <property type="status" value="NOT_ANNOTATED_CDS"/>
    <property type="molecule type" value="Genomic_DNA"/>
</dbReference>
<dbReference type="EMBL" id="CH471117">
    <property type="protein sequence ID" value="EAW66551.1"/>
    <property type="molecule type" value="Genomic_DNA"/>
</dbReference>
<dbReference type="EMBL" id="CH471117">
    <property type="protein sequence ID" value="EAW66552.1"/>
    <property type="molecule type" value="Genomic_DNA"/>
</dbReference>
<dbReference type="EMBL" id="CH471117">
    <property type="protein sequence ID" value="EAW66554.1"/>
    <property type="molecule type" value="Genomic_DNA"/>
</dbReference>
<dbReference type="EMBL" id="BC001375">
    <property type="protein sequence ID" value="AAH01375.1"/>
    <property type="molecule type" value="mRNA"/>
</dbReference>
<dbReference type="EMBL" id="BC003176">
    <property type="protein sequence ID" value="AAH03176.1"/>
    <property type="molecule type" value="mRNA"/>
</dbReference>
<dbReference type="CCDS" id="CCDS12006.1">
    <molecule id="Q96KP4-1"/>
</dbReference>
<dbReference type="CCDS" id="CCDS54190.1">
    <molecule id="Q96KP4-2"/>
</dbReference>
<dbReference type="RefSeq" id="NP_001161971.1">
    <molecule id="Q96KP4-2"/>
    <property type="nucleotide sequence ID" value="NM_001168499.2"/>
</dbReference>
<dbReference type="RefSeq" id="NP_001357177.1">
    <molecule id="Q96KP4-1"/>
    <property type="nucleotide sequence ID" value="NM_001370248.1"/>
</dbReference>
<dbReference type="RefSeq" id="NP_001357178.1">
    <molecule id="Q96KP4-1"/>
    <property type="nucleotide sequence ID" value="NM_001370249.1"/>
</dbReference>
<dbReference type="RefSeq" id="NP_001357179.1">
    <molecule id="Q96KP4-1"/>
    <property type="nucleotide sequence ID" value="NM_001370250.1"/>
</dbReference>
<dbReference type="RefSeq" id="NP_060705.2">
    <molecule id="Q96KP4-1"/>
    <property type="nucleotide sequence ID" value="NM_018235.3"/>
</dbReference>
<dbReference type="RefSeq" id="XP_005266785.1">
    <property type="nucleotide sequence ID" value="XM_005266728.2"/>
</dbReference>
<dbReference type="RefSeq" id="XP_006722566.1">
    <property type="nucleotide sequence ID" value="XM_006722503.2"/>
</dbReference>
<dbReference type="RefSeq" id="XP_011524373.1">
    <property type="nucleotide sequence ID" value="XM_011526071.2"/>
</dbReference>
<dbReference type="RefSeq" id="XP_011524374.1">
    <property type="nucleotide sequence ID" value="XM_011526072.2"/>
</dbReference>
<dbReference type="RefSeq" id="XP_047293579.1">
    <molecule id="Q96KP4-1"/>
    <property type="nucleotide sequence ID" value="XM_047437623.1"/>
</dbReference>
<dbReference type="RefSeq" id="XP_047293580.1">
    <molecule id="Q96KP4-1"/>
    <property type="nucleotide sequence ID" value="XM_047437624.1"/>
</dbReference>
<dbReference type="RefSeq" id="XP_054174780.1">
    <molecule id="Q96KP4-1"/>
    <property type="nucleotide sequence ID" value="XM_054318805.1"/>
</dbReference>
<dbReference type="PDB" id="4RUH">
    <property type="method" value="X-ray"/>
    <property type="resolution" value="2.25 A"/>
    <property type="chains" value="A/B=1-475"/>
</dbReference>
<dbReference type="PDBsum" id="4RUH"/>
<dbReference type="SMR" id="Q96KP4"/>
<dbReference type="BioGRID" id="120866">
    <property type="interactions" value="140"/>
</dbReference>
<dbReference type="FunCoup" id="Q96KP4">
    <property type="interactions" value="1758"/>
</dbReference>
<dbReference type="IntAct" id="Q96KP4">
    <property type="interactions" value="20"/>
</dbReference>
<dbReference type="STRING" id="9606.ENSP00000325548"/>
<dbReference type="MEROPS" id="M20.005"/>
<dbReference type="GlyGen" id="Q96KP4">
    <property type="glycosylation" value="1 site, 1 O-linked glycan (1 site)"/>
</dbReference>
<dbReference type="iPTMnet" id="Q96KP4"/>
<dbReference type="MetOSite" id="Q96KP4"/>
<dbReference type="PhosphoSitePlus" id="Q96KP4"/>
<dbReference type="SwissPalm" id="Q96KP4"/>
<dbReference type="BioMuta" id="CNDP2"/>
<dbReference type="DMDM" id="23396498"/>
<dbReference type="OGP" id="Q96KP4"/>
<dbReference type="CPTAC" id="CPTAC-47"/>
<dbReference type="CPTAC" id="CPTAC-48"/>
<dbReference type="jPOST" id="Q96KP4"/>
<dbReference type="MassIVE" id="Q96KP4"/>
<dbReference type="PaxDb" id="9606-ENSP00000325548"/>
<dbReference type="PeptideAtlas" id="Q96KP4"/>
<dbReference type="ProteomicsDB" id="77098">
    <molecule id="Q96KP4-1"/>
</dbReference>
<dbReference type="ProteomicsDB" id="77099">
    <molecule id="Q96KP4-2"/>
</dbReference>
<dbReference type="Pumba" id="Q96KP4"/>
<dbReference type="Antibodypedia" id="23332">
    <property type="antibodies" value="423 antibodies from 31 providers"/>
</dbReference>
<dbReference type="DNASU" id="55748"/>
<dbReference type="Ensembl" id="ENST00000324262.9">
    <molecule id="Q96KP4-1"/>
    <property type="protein sequence ID" value="ENSP00000325548.4"/>
    <property type="gene ID" value="ENSG00000133313.15"/>
</dbReference>
<dbReference type="Ensembl" id="ENST00000324301.12">
    <molecule id="Q96KP4-2"/>
    <property type="protein sequence ID" value="ENSP00000325756.8"/>
    <property type="gene ID" value="ENSG00000133313.15"/>
</dbReference>
<dbReference type="Ensembl" id="ENST00000579847.5">
    <molecule id="Q96KP4-1"/>
    <property type="protein sequence ID" value="ENSP00000462311.1"/>
    <property type="gene ID" value="ENSG00000133313.15"/>
</dbReference>
<dbReference type="GeneID" id="55748"/>
<dbReference type="KEGG" id="hsa:55748"/>
<dbReference type="MANE-Select" id="ENST00000324262.9">
    <property type="protein sequence ID" value="ENSP00000325548.4"/>
    <property type="RefSeq nucleotide sequence ID" value="NM_018235.3"/>
    <property type="RefSeq protein sequence ID" value="NP_060705.2"/>
</dbReference>
<dbReference type="UCSC" id="uc002llm.3">
    <property type="organism name" value="human"/>
</dbReference>
<dbReference type="UCSC" id="uc002lln.3">
    <molecule id="Q96KP4-1"/>
    <property type="organism name" value="human"/>
</dbReference>
<dbReference type="AGR" id="HGNC:24437"/>
<dbReference type="CTD" id="55748"/>
<dbReference type="DisGeNET" id="55748"/>
<dbReference type="GeneCards" id="CNDP2"/>
<dbReference type="HGNC" id="HGNC:24437">
    <property type="gene designation" value="CNDP2"/>
</dbReference>
<dbReference type="HPA" id="ENSG00000133313">
    <property type="expression patterns" value="Low tissue specificity"/>
</dbReference>
<dbReference type="MIM" id="169800">
    <property type="type" value="gene"/>
</dbReference>
<dbReference type="neXtProt" id="NX_Q96KP4"/>
<dbReference type="OpenTargets" id="ENSG00000133313"/>
<dbReference type="PharmGKB" id="PA134975242"/>
<dbReference type="VEuPathDB" id="HostDB:ENSG00000133313"/>
<dbReference type="eggNOG" id="KOG2276">
    <property type="taxonomic scope" value="Eukaryota"/>
</dbReference>
<dbReference type="GeneTree" id="ENSGT00940000156500"/>
<dbReference type="HOGENOM" id="CLU_029469_3_1_1"/>
<dbReference type="InParanoid" id="Q96KP4"/>
<dbReference type="OMA" id="CNVKFMI"/>
<dbReference type="OrthoDB" id="7832001at2759"/>
<dbReference type="PAN-GO" id="Q96KP4">
    <property type="GO annotations" value="3 GO annotations based on evolutionary models"/>
</dbReference>
<dbReference type="PhylomeDB" id="Q96KP4"/>
<dbReference type="TreeFam" id="TF300633"/>
<dbReference type="BRENDA" id="3.4.13.18">
    <property type="organism ID" value="2681"/>
</dbReference>
<dbReference type="PathwayCommons" id="Q96KP4"/>
<dbReference type="Reactome" id="R-HSA-174403">
    <property type="pathway name" value="Glutathione synthesis and recycling"/>
</dbReference>
<dbReference type="Reactome" id="R-HSA-9753281">
    <property type="pathway name" value="Paracetamol ADME"/>
</dbReference>
<dbReference type="SABIO-RK" id="Q96KP4"/>
<dbReference type="SignaLink" id="Q96KP4"/>
<dbReference type="BioGRID-ORCS" id="55748">
    <property type="hits" value="10 hits in 1161 CRISPR screens"/>
</dbReference>
<dbReference type="ChiTaRS" id="CNDP2">
    <property type="organism name" value="human"/>
</dbReference>
<dbReference type="GenomeRNAi" id="55748"/>
<dbReference type="Pharos" id="Q96KP4">
    <property type="development level" value="Tbio"/>
</dbReference>
<dbReference type="PRO" id="PR:Q96KP4"/>
<dbReference type="Proteomes" id="UP000005640">
    <property type="component" value="Chromosome 18"/>
</dbReference>
<dbReference type="RNAct" id="Q96KP4">
    <property type="molecule type" value="protein"/>
</dbReference>
<dbReference type="Bgee" id="ENSG00000133313">
    <property type="expression patterns" value="Expressed in adult mammalian kidney and 198 other cell types or tissues"/>
</dbReference>
<dbReference type="ExpressionAtlas" id="Q96KP4">
    <property type="expression patterns" value="baseline and differential"/>
</dbReference>
<dbReference type="GO" id="GO:0005829">
    <property type="term" value="C:cytosol"/>
    <property type="evidence" value="ECO:0000314"/>
    <property type="project" value="HPA"/>
</dbReference>
<dbReference type="GO" id="GO:0070062">
    <property type="term" value="C:extracellular exosome"/>
    <property type="evidence" value="ECO:0007005"/>
    <property type="project" value="UniProtKB"/>
</dbReference>
<dbReference type="GO" id="GO:0005654">
    <property type="term" value="C:nucleoplasm"/>
    <property type="evidence" value="ECO:0000314"/>
    <property type="project" value="HPA"/>
</dbReference>
<dbReference type="GO" id="GO:0004180">
    <property type="term" value="F:carboxypeptidase activity"/>
    <property type="evidence" value="ECO:0007669"/>
    <property type="project" value="UniProtKB-KW"/>
</dbReference>
<dbReference type="GO" id="GO:0016805">
    <property type="term" value="F:dipeptidase activity"/>
    <property type="evidence" value="ECO:0000318"/>
    <property type="project" value="GO_Central"/>
</dbReference>
<dbReference type="GO" id="GO:0046872">
    <property type="term" value="F:metal ion binding"/>
    <property type="evidence" value="ECO:0007669"/>
    <property type="project" value="UniProtKB-KW"/>
</dbReference>
<dbReference type="GO" id="GO:0070573">
    <property type="term" value="F:metallodipeptidase activity"/>
    <property type="evidence" value="ECO:0007669"/>
    <property type="project" value="InterPro"/>
</dbReference>
<dbReference type="GO" id="GO:0006508">
    <property type="term" value="P:proteolysis"/>
    <property type="evidence" value="ECO:0000318"/>
    <property type="project" value="GO_Central"/>
</dbReference>
<dbReference type="CDD" id="cd05676">
    <property type="entry name" value="M20_dipept_like_CNDP"/>
    <property type="match status" value="1"/>
</dbReference>
<dbReference type="FunFam" id="3.30.70.360:FF:000008">
    <property type="entry name" value="Cytosolic non-specific dipeptidase"/>
    <property type="match status" value="1"/>
</dbReference>
<dbReference type="FunFam" id="3.40.630.10:FF:000014">
    <property type="entry name" value="Cytosolic non-specific dipeptidase"/>
    <property type="match status" value="1"/>
</dbReference>
<dbReference type="Gene3D" id="3.30.70.360">
    <property type="match status" value="1"/>
</dbReference>
<dbReference type="Gene3D" id="3.40.630.10">
    <property type="entry name" value="Zn peptidases"/>
    <property type="match status" value="1"/>
</dbReference>
<dbReference type="InterPro" id="IPR001261">
    <property type="entry name" value="ArgE/DapE_CS"/>
</dbReference>
<dbReference type="InterPro" id="IPR017153">
    <property type="entry name" value="CNDP/DUG1"/>
</dbReference>
<dbReference type="InterPro" id="IPR051458">
    <property type="entry name" value="Cyt/Met_Dipeptidase"/>
</dbReference>
<dbReference type="InterPro" id="IPR002933">
    <property type="entry name" value="Peptidase_M20"/>
</dbReference>
<dbReference type="InterPro" id="IPR011650">
    <property type="entry name" value="Peptidase_M20_dimer"/>
</dbReference>
<dbReference type="PANTHER" id="PTHR43270">
    <property type="entry name" value="BETA-ALA-HIS DIPEPTIDASE"/>
    <property type="match status" value="1"/>
</dbReference>
<dbReference type="PANTHER" id="PTHR43270:SF11">
    <property type="entry name" value="CYTOSOLIC NON-SPECIFIC DIPEPTIDASE"/>
    <property type="match status" value="1"/>
</dbReference>
<dbReference type="Pfam" id="PF07687">
    <property type="entry name" value="M20_dimer"/>
    <property type="match status" value="1"/>
</dbReference>
<dbReference type="Pfam" id="PF01546">
    <property type="entry name" value="Peptidase_M20"/>
    <property type="match status" value="1"/>
</dbReference>
<dbReference type="PIRSF" id="PIRSF037242">
    <property type="entry name" value="CNDP_dipeptidase"/>
    <property type="match status" value="1"/>
</dbReference>
<dbReference type="SUPFAM" id="SSF53187">
    <property type="entry name" value="Zn-dependent exopeptidases"/>
    <property type="match status" value="1"/>
</dbReference>
<dbReference type="PROSITE" id="PS00759">
    <property type="entry name" value="ARGE_DAPE_CPG2_2"/>
    <property type="match status" value="1"/>
</dbReference>
<protein>
    <recommendedName>
        <fullName evidence="14">Cytosolic non-specific dipeptidase</fullName>
        <ecNumber evidence="4 6">3.4.13.18</ecNumber>
    </recommendedName>
    <alternativeName>
        <fullName>CNDP dipeptidase 2</fullName>
    </alternativeName>
    <alternativeName>
        <fullName>Glutamate carboxypeptidase-like protein 1</fullName>
    </alternativeName>
    <alternativeName>
        <fullName>Peptidase A</fullName>
    </alternativeName>
    <alternativeName>
        <fullName evidence="3">Threonyl dipeptidase</fullName>
    </alternativeName>
</protein>
<evidence type="ECO:0000250" key="1"/>
<evidence type="ECO:0000250" key="2">
    <source>
        <dbReference type="UniProtKB" id="Q6Q0N1"/>
    </source>
</evidence>
<evidence type="ECO:0000250" key="3">
    <source>
        <dbReference type="UniProtKB" id="Q9D1A2"/>
    </source>
</evidence>
<evidence type="ECO:0000269" key="4">
    <source>
    </source>
</evidence>
<evidence type="ECO:0000269" key="5">
    <source>
    </source>
</evidence>
<evidence type="ECO:0000269" key="6">
    <source>
    </source>
</evidence>
<evidence type="ECO:0000269" key="7">
    <source>
    </source>
</evidence>
<evidence type="ECO:0000269" key="8">
    <source>
    </source>
</evidence>
<evidence type="ECO:0000269" key="9">
    <source ref="19"/>
</evidence>
<evidence type="ECO:0000269" key="10">
    <source ref="2"/>
</evidence>
<evidence type="ECO:0000269" key="11">
    <source ref="9"/>
</evidence>
<evidence type="ECO:0000303" key="12">
    <source>
    </source>
</evidence>
<evidence type="ECO:0000303" key="13">
    <source>
    </source>
</evidence>
<evidence type="ECO:0000303" key="14">
    <source>
    </source>
</evidence>
<evidence type="ECO:0000303" key="15">
    <source>
    </source>
</evidence>
<evidence type="ECO:0000305" key="16"/>
<evidence type="ECO:0000305" key="17">
    <source>
    </source>
</evidence>
<evidence type="ECO:0000305" key="18">
    <source>
    </source>
</evidence>
<evidence type="ECO:0000312" key="19">
    <source>
        <dbReference type="HGNC" id="HGNC:24437"/>
    </source>
</evidence>
<evidence type="ECO:0007744" key="20">
    <source>
    </source>
</evidence>
<evidence type="ECO:0007744" key="21">
    <source>
    </source>
</evidence>
<evidence type="ECO:0007744" key="22">
    <source>
    </source>
</evidence>
<evidence type="ECO:0007744" key="23">
    <source>
    </source>
</evidence>
<evidence type="ECO:0007829" key="24">
    <source>
        <dbReference type="PDB" id="4RUH"/>
    </source>
</evidence>
<proteinExistence type="evidence at protein level"/>